<reference key="1">
    <citation type="journal article" date="2011" name="PLoS ONE">
        <title>The complete genome sequence of Thermoproteus tenax: a physiologically versatile member of the Crenarchaeota.</title>
        <authorList>
            <person name="Siebers B."/>
            <person name="Zaparty M."/>
            <person name="Raddatz G."/>
            <person name="Tjaden B."/>
            <person name="Albers S.V."/>
            <person name="Bell S.D."/>
            <person name="Blombach F."/>
            <person name="Kletzin A."/>
            <person name="Kyrpides N."/>
            <person name="Lanz C."/>
            <person name="Plagens A."/>
            <person name="Rampp M."/>
            <person name="Rosinus A."/>
            <person name="von Jan M."/>
            <person name="Makarova K.S."/>
            <person name="Klenk H.P."/>
            <person name="Schuster S.C."/>
            <person name="Hensel R."/>
        </authorList>
    </citation>
    <scope>NUCLEOTIDE SEQUENCE [LARGE SCALE GENOMIC DNA]</scope>
    <source>
        <strain>ATCC 35583 / DSM 2078 / JCM 9277 / NBRC 100435 / Kra 1</strain>
    </source>
</reference>
<reference key="2">
    <citation type="journal article" date="2012" name="J. Bacteriol.">
        <title>Characterization of the CRISPR/Cas subtype I-A system of the hyperthermophilic crenarchaeon Thermoproteus tenax.</title>
        <authorList>
            <person name="Plagens A."/>
            <person name="Tjaden B."/>
            <person name="Hagemann A."/>
            <person name="Randau L."/>
            <person name="Hensel R."/>
        </authorList>
    </citation>
    <scope>SUBUNIT</scope>
    <scope>INDUCTION</scope>
    <scope>OPERON STRUCTURE</scope>
    <source>
        <strain>ATCC 35583 / DSM 2078 / JCM 9277 / NBRC 100435 / Kra 1</strain>
    </source>
</reference>
<protein>
    <recommendedName>
        <fullName>CRISPR-associated protein Cas5</fullName>
    </recommendedName>
</protein>
<comment type="function">
    <text evidence="1">CRISPR (clustered regularly interspaced short palindromic repeat) is an adaptive immune system that provides protection against mobile genetic elements (viruses, transposable elements and conjugative plasmids). CRISPR clusters contain spacers, sequences complementary to antecedent mobile elements, and target invading nucleic acids. CRISPR clusters are transcribed and processed into CRISPR RNA (crRNA) (By similarity).</text>
</comment>
<comment type="subunit">
    <text evidence="2">Can form a Cascade complex with Csa5, Cas7, Cas3, Cas3' and Cas8a2.</text>
</comment>
<comment type="induction">
    <text evidence="2">Repressed by 5 J/m2 ultraviolet light and 50 mM NaCl, slightly induced by 20 J/m2 ultraviolet light, 100 and 150 mM Nacl. Member of the csa5-cas7-cas5a-cas3-cas3'-cas8a2 operon.</text>
</comment>
<comment type="similarity">
    <text evidence="3">Belongs to the CRISPR-associated protein Cas5 family. Subtype I-A/Apern subfamily.</text>
</comment>
<feature type="chain" id="PRO_0000422227" description="CRISPR-associated protein Cas5">
    <location>
        <begin position="1"/>
        <end position="226"/>
    </location>
</feature>
<sequence length="226" mass="24530">MHYYLIEARAPLYSVKVVDVYQVASAYPLPTPHAVVGALGAAMAHAGMCRGLQCMKEAEGLVVAARPAAVGELAKFPAVLWRTRGVLEDKSLPAGLEDYAGARDAMVREYVYAHAVKILLVTRKRVPQHVIRLMARLGDSESYVSVVDVLEGKPRECGGLVNVAVRAAKARRGSYTLYRALDERGNRELFAYPVVEEGGVYRRGGVEVGSKVLCLGEAVFPEGDGW</sequence>
<gene>
    <name type="primary">cas5a</name>
    <name type="ordered locus">TTX_1252</name>
</gene>
<accession>G4RJZ2</accession>
<proteinExistence type="evidence at protein level"/>
<organism>
    <name type="scientific">Thermoproteus tenax (strain ATCC 35583 / DSM 2078 / JCM 9277 / NBRC 100435 / Kra 1)</name>
    <dbReference type="NCBI Taxonomy" id="768679"/>
    <lineage>
        <taxon>Archaea</taxon>
        <taxon>Thermoproteota</taxon>
        <taxon>Thermoprotei</taxon>
        <taxon>Thermoproteales</taxon>
        <taxon>Thermoproteaceae</taxon>
        <taxon>Thermoproteus</taxon>
    </lineage>
</organism>
<name>CAS5_THETK</name>
<dbReference type="EMBL" id="FN869859">
    <property type="protein sequence ID" value="CCC81887.1"/>
    <property type="molecule type" value="Genomic_DNA"/>
</dbReference>
<dbReference type="RefSeq" id="WP_014127142.1">
    <property type="nucleotide sequence ID" value="NC_016070.1"/>
</dbReference>
<dbReference type="STRING" id="768679.TTX_1252"/>
<dbReference type="PaxDb" id="768679-TTX_1252"/>
<dbReference type="GeneID" id="11262132"/>
<dbReference type="KEGG" id="ttn:TTX_1252"/>
<dbReference type="PATRIC" id="fig|768679.9.peg.1265"/>
<dbReference type="eggNOG" id="arCOG02672">
    <property type="taxonomic scope" value="Archaea"/>
</dbReference>
<dbReference type="HOGENOM" id="CLU_1212637_0_0_2"/>
<dbReference type="OrthoDB" id="27308at2157"/>
<dbReference type="Proteomes" id="UP000002654">
    <property type="component" value="Chromosome"/>
</dbReference>
<dbReference type="GO" id="GO:0051607">
    <property type="term" value="P:defense response to virus"/>
    <property type="evidence" value="ECO:0007669"/>
    <property type="project" value="UniProtKB-KW"/>
</dbReference>
<dbReference type="GO" id="GO:0043571">
    <property type="term" value="P:maintenance of CRISPR repeat elements"/>
    <property type="evidence" value="ECO:0007669"/>
    <property type="project" value="InterPro"/>
</dbReference>
<dbReference type="Gene3D" id="3.30.70.3120">
    <property type="match status" value="1"/>
</dbReference>
<dbReference type="InterPro" id="IPR021124">
    <property type="entry name" value="CRISPR-assoc_prot_Cas5"/>
</dbReference>
<dbReference type="InterPro" id="IPR013422">
    <property type="entry name" value="CRISPR-assoc_prot_Cas5_N"/>
</dbReference>
<dbReference type="InterPro" id="IPR010153">
    <property type="entry name" value="CRISPR-assoc_prot_Cas5a-typ"/>
</dbReference>
<dbReference type="InterPro" id="IPR053725">
    <property type="entry name" value="CRISPR_Cas5_sf"/>
</dbReference>
<dbReference type="NCBIfam" id="TIGR01874">
    <property type="entry name" value="cas_cas5a"/>
    <property type="match status" value="1"/>
</dbReference>
<dbReference type="NCBIfam" id="TIGR02593">
    <property type="entry name" value="CRISPR_cas5"/>
    <property type="match status" value="1"/>
</dbReference>
<dbReference type="Pfam" id="PF09704">
    <property type="entry name" value="Cas_Cas5d"/>
    <property type="match status" value="1"/>
</dbReference>
<keyword id="KW-0051">Antiviral defense</keyword>
<keyword id="KW-1185">Reference proteome</keyword>
<evidence type="ECO:0000250" key="1"/>
<evidence type="ECO:0000269" key="2">
    <source>
    </source>
</evidence>
<evidence type="ECO:0000305" key="3"/>